<organism>
    <name type="scientific">Tityus serrulatus</name>
    <name type="common">Brazilian scorpion</name>
    <dbReference type="NCBI Taxonomy" id="6887"/>
    <lineage>
        <taxon>Eukaryota</taxon>
        <taxon>Metazoa</taxon>
        <taxon>Ecdysozoa</taxon>
        <taxon>Arthropoda</taxon>
        <taxon>Chelicerata</taxon>
        <taxon>Arachnida</taxon>
        <taxon>Scorpiones</taxon>
        <taxon>Buthida</taxon>
        <taxon>Buthoidea</taxon>
        <taxon>Buthidae</taxon>
        <taxon>Tityus</taxon>
    </lineage>
</organism>
<sequence>KHFGKDSNFPFGT</sequence>
<feature type="peptide" id="PRO_0000401150" description="Venom peptide 1" evidence="1">
    <location>
        <begin position="1"/>
        <end position="13"/>
    </location>
</feature>
<feature type="peptide" id="PRO_0000401151" description="Venom peptide 2" evidence="1 2">
    <location>
        <begin position="1"/>
        <end position="11"/>
    </location>
</feature>
<feature type="modified residue" description="Phenylalanine amide; in venom peptide 2" evidence="1">
    <location>
        <position position="11"/>
    </location>
</feature>
<feature type="unsure residue" description="K or Q" evidence="1">
    <location>
        <position position="5"/>
    </location>
</feature>
<protein>
    <recommendedName>
        <fullName evidence="3">Venom peptide 1</fullName>
    </recommendedName>
    <component>
        <recommendedName>
            <fullName evidence="3">Venom peptide 2</fullName>
        </recommendedName>
        <alternativeName>
            <fullName evidence="4">Cryptide TyPep-14</fullName>
        </alternativeName>
    </component>
</protein>
<name>NDB4S_TITSE</name>
<proteinExistence type="evidence at protein level"/>
<evidence type="ECO:0000269" key="1">
    <source>
    </source>
</evidence>
<evidence type="ECO:0000269" key="2">
    <source>
    </source>
</evidence>
<evidence type="ECO:0000303" key="3">
    <source>
    </source>
</evidence>
<evidence type="ECO:0000303" key="4">
    <source>
    </source>
</evidence>
<evidence type="ECO:0000305" key="5"/>
<reference key="1">
    <citation type="journal article" date="2008" name="Toxicon">
        <title>Tityus serrulatus venom peptidomics: assessing venom peptide diversity.</title>
        <authorList>
            <person name="Rates B."/>
            <person name="Ferraz K.K."/>
            <person name="Borges M.H."/>
            <person name="Richardson M."/>
            <person name="De Lima M.E."/>
            <person name="Pimenta A.M."/>
        </authorList>
    </citation>
    <scope>PROTEIN SEQUENCE</scope>
    <scope>SUBCELLULAR LOCATION</scope>
    <scope>AMIDATION AT PHE-11</scope>
    <source>
        <tissue>Venom</tissue>
    </source>
</reference>
<reference key="2">
    <citation type="journal article" date="2024" name="J. Nat. Prod.">
        <title>Profiling the linear peptides of venom from the Brazilian scorpion Tityus serrulatus: structural and functional characterization.</title>
        <authorList>
            <person name="Dias N.B."/>
            <person name="de Souza B.M."/>
            <person name="Cid-Alda F."/>
            <person name="Dorce V.A.C."/>
            <person name="Cocchi F.K."/>
            <person name="Palma M.S."/>
        </authorList>
    </citation>
    <scope>PROTEIN SEQUENCE OF 1-11 (VENOM PEPTIDE 2)</scope>
    <scope>IDENTIFICATION BY MASS SPECTROMETRY</scope>
    <scope>SUBCELLULAR LOCATION</scope>
    <scope>SYNTHESIS OF 1-11</scope>
    <scope>FUNCTION</scope>
    <scope>BIOASSAY</scope>
    <source>
        <tissue>Venom</tissue>
    </source>
</reference>
<keyword id="KW-0027">Amidation</keyword>
<keyword id="KW-0044">Antibiotic</keyword>
<keyword id="KW-0929">Antimicrobial</keyword>
<keyword id="KW-0903">Direct protein sequencing</keyword>
<keyword id="KW-0964">Secreted</keyword>
<accession>P86825</accession>
<dbReference type="GO" id="GO:0005576">
    <property type="term" value="C:extracellular region"/>
    <property type="evidence" value="ECO:0007669"/>
    <property type="project" value="UniProtKB-SubCell"/>
</dbReference>
<dbReference type="GO" id="GO:0042742">
    <property type="term" value="P:defense response to bacterium"/>
    <property type="evidence" value="ECO:0007669"/>
    <property type="project" value="UniProtKB-KW"/>
</dbReference>
<comment type="function">
    <text evidence="5">May be an antibacterial peptide.</text>
</comment>
<comment type="function">
    <molecule>Venom peptide 2</molecule>
    <text evidence="2">Does not cause hemolysis, mast cell degranulation, LDH release, and does not have antimicrobial activity. In vivo, induces discomfort and anxiety in mice, as it moderately diminishes locomotion (but has no effect on rearing behavior).</text>
</comment>
<comment type="subcellular location">
    <subcellularLocation>
        <location evidence="1">Secreted</location>
    </subcellularLocation>
</comment>
<comment type="tissue specificity">
    <text evidence="5">Expressed by the venom gland.</text>
</comment>
<comment type="similarity">
    <text evidence="5">Belongs to the non-disulfide-bridged peptide (NDBP) superfamily. Short antimicrobial peptide (group 4) family.</text>
</comment>